<protein>
    <recommendedName>
        <fullName evidence="1">tRNA uridine 5-carboxymethylaminomethyl modification enzyme MnmG</fullName>
    </recommendedName>
    <alternativeName>
        <fullName evidence="1">Glucose-inhibited division protein A</fullName>
    </alternativeName>
</protein>
<gene>
    <name evidence="1" type="primary">mnmG</name>
    <name evidence="1" type="synonym">gidA</name>
    <name type="ordered locus">Patl_4306</name>
</gene>
<name>MNMG_PSEA6</name>
<keyword id="KW-0963">Cytoplasm</keyword>
<keyword id="KW-0274">FAD</keyword>
<keyword id="KW-0285">Flavoprotein</keyword>
<keyword id="KW-0520">NAD</keyword>
<keyword id="KW-0819">tRNA processing</keyword>
<feature type="chain" id="PRO_1000016642" description="tRNA uridine 5-carboxymethylaminomethyl modification enzyme MnmG">
    <location>
        <begin position="1"/>
        <end position="633"/>
    </location>
</feature>
<feature type="binding site" evidence="1">
    <location>
        <begin position="13"/>
        <end position="18"/>
    </location>
    <ligand>
        <name>FAD</name>
        <dbReference type="ChEBI" id="CHEBI:57692"/>
    </ligand>
</feature>
<feature type="binding site" evidence="1">
    <location>
        <begin position="273"/>
        <end position="287"/>
    </location>
    <ligand>
        <name>NAD(+)</name>
        <dbReference type="ChEBI" id="CHEBI:57540"/>
    </ligand>
</feature>
<reference key="1">
    <citation type="submission" date="2006-06" db="EMBL/GenBank/DDBJ databases">
        <title>Complete sequence of Pseudoalteromonas atlantica T6c.</title>
        <authorList>
            <consortium name="US DOE Joint Genome Institute"/>
            <person name="Copeland A."/>
            <person name="Lucas S."/>
            <person name="Lapidus A."/>
            <person name="Barry K."/>
            <person name="Detter J.C."/>
            <person name="Glavina del Rio T."/>
            <person name="Hammon N."/>
            <person name="Israni S."/>
            <person name="Dalin E."/>
            <person name="Tice H."/>
            <person name="Pitluck S."/>
            <person name="Saunders E."/>
            <person name="Brettin T."/>
            <person name="Bruce D."/>
            <person name="Han C."/>
            <person name="Tapia R."/>
            <person name="Gilna P."/>
            <person name="Schmutz J."/>
            <person name="Larimer F."/>
            <person name="Land M."/>
            <person name="Hauser L."/>
            <person name="Kyrpides N."/>
            <person name="Kim E."/>
            <person name="Karls A.C."/>
            <person name="Bartlett D."/>
            <person name="Higgins B.P."/>
            <person name="Richardson P."/>
        </authorList>
    </citation>
    <scope>NUCLEOTIDE SEQUENCE [LARGE SCALE GENOMIC DNA]</scope>
    <source>
        <strain>T6c / ATCC BAA-1087</strain>
    </source>
</reference>
<accession>Q15MT3</accession>
<comment type="function">
    <text evidence="1">NAD-binding protein involved in the addition of a carboxymethylaminomethyl (cmnm) group at the wobble position (U34) of certain tRNAs, forming tRNA-cmnm(5)s(2)U34.</text>
</comment>
<comment type="cofactor">
    <cofactor evidence="1">
        <name>FAD</name>
        <dbReference type="ChEBI" id="CHEBI:57692"/>
    </cofactor>
</comment>
<comment type="subunit">
    <text evidence="1">Homodimer. Heterotetramer of two MnmE and two MnmG subunits.</text>
</comment>
<comment type="subcellular location">
    <subcellularLocation>
        <location evidence="1">Cytoplasm</location>
    </subcellularLocation>
</comment>
<comment type="similarity">
    <text evidence="1">Belongs to the MnmG family.</text>
</comment>
<dbReference type="EMBL" id="CP000388">
    <property type="protein sequence ID" value="ABG42805.1"/>
    <property type="molecule type" value="Genomic_DNA"/>
</dbReference>
<dbReference type="RefSeq" id="WP_011576984.1">
    <property type="nucleotide sequence ID" value="NC_008228.1"/>
</dbReference>
<dbReference type="SMR" id="Q15MT3"/>
<dbReference type="STRING" id="342610.Patl_4306"/>
<dbReference type="KEGG" id="pat:Patl_4306"/>
<dbReference type="eggNOG" id="COG0445">
    <property type="taxonomic scope" value="Bacteria"/>
</dbReference>
<dbReference type="HOGENOM" id="CLU_007831_2_2_6"/>
<dbReference type="OrthoDB" id="9815560at2"/>
<dbReference type="Proteomes" id="UP000001981">
    <property type="component" value="Chromosome"/>
</dbReference>
<dbReference type="GO" id="GO:0005829">
    <property type="term" value="C:cytosol"/>
    <property type="evidence" value="ECO:0007669"/>
    <property type="project" value="TreeGrafter"/>
</dbReference>
<dbReference type="GO" id="GO:0050660">
    <property type="term" value="F:flavin adenine dinucleotide binding"/>
    <property type="evidence" value="ECO:0007669"/>
    <property type="project" value="UniProtKB-UniRule"/>
</dbReference>
<dbReference type="GO" id="GO:0030488">
    <property type="term" value="P:tRNA methylation"/>
    <property type="evidence" value="ECO:0007669"/>
    <property type="project" value="TreeGrafter"/>
</dbReference>
<dbReference type="GO" id="GO:0002098">
    <property type="term" value="P:tRNA wobble uridine modification"/>
    <property type="evidence" value="ECO:0007669"/>
    <property type="project" value="InterPro"/>
</dbReference>
<dbReference type="FunFam" id="1.10.10.1800:FF:000001">
    <property type="entry name" value="tRNA uridine 5-carboxymethylaminomethyl modification enzyme MnmG"/>
    <property type="match status" value="1"/>
</dbReference>
<dbReference type="FunFam" id="1.10.150.570:FF:000001">
    <property type="entry name" value="tRNA uridine 5-carboxymethylaminomethyl modification enzyme MnmG"/>
    <property type="match status" value="1"/>
</dbReference>
<dbReference type="FunFam" id="3.50.50.60:FF:000002">
    <property type="entry name" value="tRNA uridine 5-carboxymethylaminomethyl modification enzyme MnmG"/>
    <property type="match status" value="1"/>
</dbReference>
<dbReference type="FunFam" id="3.50.50.60:FF:000010">
    <property type="entry name" value="tRNA uridine 5-carboxymethylaminomethyl modification enzyme MnmG"/>
    <property type="match status" value="1"/>
</dbReference>
<dbReference type="Gene3D" id="3.50.50.60">
    <property type="entry name" value="FAD/NAD(P)-binding domain"/>
    <property type="match status" value="2"/>
</dbReference>
<dbReference type="Gene3D" id="1.10.150.570">
    <property type="entry name" value="GidA associated domain, C-terminal subdomain"/>
    <property type="match status" value="1"/>
</dbReference>
<dbReference type="Gene3D" id="1.10.10.1800">
    <property type="entry name" value="tRNA uridine 5-carboxymethylaminomethyl modification enzyme MnmG/GidA"/>
    <property type="match status" value="1"/>
</dbReference>
<dbReference type="HAMAP" id="MF_00129">
    <property type="entry name" value="MnmG_GidA"/>
    <property type="match status" value="1"/>
</dbReference>
<dbReference type="InterPro" id="IPR036188">
    <property type="entry name" value="FAD/NAD-bd_sf"/>
</dbReference>
<dbReference type="InterPro" id="IPR049312">
    <property type="entry name" value="GIDA_C_N"/>
</dbReference>
<dbReference type="InterPro" id="IPR004416">
    <property type="entry name" value="MnmG"/>
</dbReference>
<dbReference type="InterPro" id="IPR002218">
    <property type="entry name" value="MnmG-rel"/>
</dbReference>
<dbReference type="InterPro" id="IPR020595">
    <property type="entry name" value="MnmG-rel_CS"/>
</dbReference>
<dbReference type="InterPro" id="IPR026904">
    <property type="entry name" value="MnmG_C"/>
</dbReference>
<dbReference type="InterPro" id="IPR047001">
    <property type="entry name" value="MnmG_C_subdom"/>
</dbReference>
<dbReference type="InterPro" id="IPR044920">
    <property type="entry name" value="MnmG_C_subdom_sf"/>
</dbReference>
<dbReference type="InterPro" id="IPR040131">
    <property type="entry name" value="MnmG_N"/>
</dbReference>
<dbReference type="NCBIfam" id="TIGR00136">
    <property type="entry name" value="mnmG_gidA"/>
    <property type="match status" value="1"/>
</dbReference>
<dbReference type="PANTHER" id="PTHR11806">
    <property type="entry name" value="GLUCOSE INHIBITED DIVISION PROTEIN A"/>
    <property type="match status" value="1"/>
</dbReference>
<dbReference type="PANTHER" id="PTHR11806:SF0">
    <property type="entry name" value="PROTEIN MTO1 HOMOLOG, MITOCHONDRIAL"/>
    <property type="match status" value="1"/>
</dbReference>
<dbReference type="Pfam" id="PF01134">
    <property type="entry name" value="GIDA"/>
    <property type="match status" value="1"/>
</dbReference>
<dbReference type="Pfam" id="PF21680">
    <property type="entry name" value="GIDA_C_1st"/>
    <property type="match status" value="1"/>
</dbReference>
<dbReference type="Pfam" id="PF13932">
    <property type="entry name" value="SAM_GIDA_C"/>
    <property type="match status" value="1"/>
</dbReference>
<dbReference type="SMART" id="SM01228">
    <property type="entry name" value="GIDA_assoc_3"/>
    <property type="match status" value="1"/>
</dbReference>
<dbReference type="SUPFAM" id="SSF51905">
    <property type="entry name" value="FAD/NAD(P)-binding domain"/>
    <property type="match status" value="1"/>
</dbReference>
<dbReference type="PROSITE" id="PS01280">
    <property type="entry name" value="GIDA_1"/>
    <property type="match status" value="1"/>
</dbReference>
<dbReference type="PROSITE" id="PS01281">
    <property type="entry name" value="GIDA_2"/>
    <property type="match status" value="1"/>
</dbReference>
<proteinExistence type="inferred from homology"/>
<evidence type="ECO:0000255" key="1">
    <source>
        <dbReference type="HAMAP-Rule" id="MF_00129"/>
    </source>
</evidence>
<organism>
    <name type="scientific">Pseudoalteromonas atlantica (strain T6c / ATCC BAA-1087)</name>
    <dbReference type="NCBI Taxonomy" id="3042615"/>
    <lineage>
        <taxon>Bacteria</taxon>
        <taxon>Pseudomonadati</taxon>
        <taxon>Pseudomonadota</taxon>
        <taxon>Gammaproteobacteria</taxon>
        <taxon>Alteromonadales</taxon>
        <taxon>Alteromonadaceae</taxon>
        <taxon>Paraglaciecola</taxon>
    </lineage>
</organism>
<sequence length="633" mass="70042">MFYQQQFDVIVVGGGHAGTEAALAAARMGSKTLLLTHNVETLGQMSCNPAIGGIGKGHLVKEIDALGGSMAKAIDKGGIQFRTLNSSKGPAVRATRAQADRSLYRSAIRDIVEHQDNLTLFQQSCDDLIVENDQVTGVVTQMGLKFRAKSVVITVGTFLGGTIHIGMENYKGGRAGDPPSIALADRLRALPFRVSRLKTGTPARLDARTLDYSVMQEQLGDSPTPVFSFMGKREDHPRQIACYITHTNSKTHDIIRGGLDRSPMYTGVIEGIGPRYCPSIEDKINRFADKDSHQIFVEPEGLNSIEVYPNGISTSLPFDVQFELVRSIKGFENAHIIRPGYAIEYDFFDPRDLKQTLETKFIKGLFFAGQINGTTGYEEAGAQGLIAGANASLQCQGKDPLILRRDEAYMGVLIDDLATMGTKEPYRMFTSRAEYRLLLREDNADIRLTAKGHELGLVDEERWQAFNIKLEAIELERQRLRDTWVHPKHAAAEALNPLLKNALSKENTLEDLIRRPEMTYETLMNVTEFGPGITDPKAAEQVEIQIKYAGYIERQQDEIAKSRKNENTLIPLDFDYSQISGLSNEVVAKLSDAKPETLGLASRISGITPAAISLLLVYLKKHGLLRKTERKTA</sequence>